<proteinExistence type="inferred from homology"/>
<accession>B8IZX7</accession>
<reference key="1">
    <citation type="submission" date="2009-01" db="EMBL/GenBank/DDBJ databases">
        <title>Complete sequence of Desulfovibrio desulfuricans subsp. desulfuricans str. ATCC 27774.</title>
        <authorList>
            <consortium name="US DOE Joint Genome Institute"/>
            <person name="Lucas S."/>
            <person name="Copeland A."/>
            <person name="Lapidus A."/>
            <person name="Glavina del Rio T."/>
            <person name="Tice H."/>
            <person name="Bruce D."/>
            <person name="Goodwin L."/>
            <person name="Pitluck S."/>
            <person name="Sims D."/>
            <person name="Lu M."/>
            <person name="Kiss H."/>
            <person name="Meineke L."/>
            <person name="Brettin T."/>
            <person name="Detter J.C."/>
            <person name="Han C."/>
            <person name="Larimer F."/>
            <person name="Land M."/>
            <person name="Hauser L."/>
            <person name="Kyrpides N."/>
            <person name="Ovchinnikova G."/>
            <person name="Hazen T.C."/>
        </authorList>
    </citation>
    <scope>NUCLEOTIDE SEQUENCE [LARGE SCALE GENOMIC DNA]</scope>
    <source>
        <strain>ATCC 27774 / DSM 6949 / MB</strain>
    </source>
</reference>
<name>DAPF_DESDA</name>
<organism>
    <name type="scientific">Desulfovibrio desulfuricans (strain ATCC 27774 / DSM 6949 / MB)</name>
    <dbReference type="NCBI Taxonomy" id="525146"/>
    <lineage>
        <taxon>Bacteria</taxon>
        <taxon>Pseudomonadati</taxon>
        <taxon>Thermodesulfobacteriota</taxon>
        <taxon>Desulfovibrionia</taxon>
        <taxon>Desulfovibrionales</taxon>
        <taxon>Desulfovibrionaceae</taxon>
        <taxon>Desulfovibrio</taxon>
    </lineage>
</organism>
<evidence type="ECO:0000255" key="1">
    <source>
        <dbReference type="HAMAP-Rule" id="MF_00197"/>
    </source>
</evidence>
<feature type="chain" id="PRO_1000124410" description="Diaminopimelate epimerase">
    <location>
        <begin position="1"/>
        <end position="287"/>
    </location>
</feature>
<feature type="active site" description="Proton donor" evidence="1">
    <location>
        <position position="75"/>
    </location>
</feature>
<feature type="active site" description="Proton acceptor" evidence="1">
    <location>
        <position position="230"/>
    </location>
</feature>
<feature type="binding site" evidence="1">
    <location>
        <position position="15"/>
    </location>
    <ligand>
        <name>substrate</name>
    </ligand>
</feature>
<feature type="binding site" evidence="1">
    <location>
        <position position="66"/>
    </location>
    <ligand>
        <name>substrate</name>
    </ligand>
</feature>
<feature type="binding site" evidence="1">
    <location>
        <begin position="76"/>
        <end position="77"/>
    </location>
    <ligand>
        <name>substrate</name>
    </ligand>
</feature>
<feature type="binding site" evidence="1">
    <location>
        <position position="170"/>
    </location>
    <ligand>
        <name>substrate</name>
    </ligand>
</feature>
<feature type="binding site" evidence="1">
    <location>
        <position position="203"/>
    </location>
    <ligand>
        <name>substrate</name>
    </ligand>
</feature>
<feature type="binding site" evidence="1">
    <location>
        <begin position="221"/>
        <end position="222"/>
    </location>
    <ligand>
        <name>substrate</name>
    </ligand>
</feature>
<feature type="binding site" evidence="1">
    <location>
        <begin position="231"/>
        <end position="232"/>
    </location>
    <ligand>
        <name>substrate</name>
    </ligand>
</feature>
<feature type="site" description="Could be important to modulate the pK values of the two catalytic cysteine residues" evidence="1">
    <location>
        <position position="172"/>
    </location>
</feature>
<feature type="site" description="Could be important to modulate the pK values of the two catalytic cysteine residues" evidence="1">
    <location>
        <position position="221"/>
    </location>
</feature>
<comment type="function">
    <text evidence="1">Catalyzes the stereoinversion of LL-2,6-diaminopimelate (L,L-DAP) to meso-diaminopimelate (meso-DAP), a precursor of L-lysine and an essential component of the bacterial peptidoglycan.</text>
</comment>
<comment type="catalytic activity">
    <reaction evidence="1">
        <text>(2S,6S)-2,6-diaminopimelate = meso-2,6-diaminopimelate</text>
        <dbReference type="Rhea" id="RHEA:15393"/>
        <dbReference type="ChEBI" id="CHEBI:57609"/>
        <dbReference type="ChEBI" id="CHEBI:57791"/>
        <dbReference type="EC" id="5.1.1.7"/>
    </reaction>
</comment>
<comment type="pathway">
    <text evidence="1">Amino-acid biosynthesis; L-lysine biosynthesis via DAP pathway; DL-2,6-diaminopimelate from LL-2,6-diaminopimelate: step 1/1.</text>
</comment>
<comment type="subunit">
    <text evidence="1">Homodimer.</text>
</comment>
<comment type="subcellular location">
    <subcellularLocation>
        <location evidence="1">Cytoplasm</location>
    </subcellularLocation>
</comment>
<comment type="similarity">
    <text evidence="1">Belongs to the diaminopimelate epimerase family.</text>
</comment>
<dbReference type="EC" id="5.1.1.7" evidence="1"/>
<dbReference type="EMBL" id="CP001358">
    <property type="protein sequence ID" value="ACL49054.1"/>
    <property type="molecule type" value="Genomic_DNA"/>
</dbReference>
<dbReference type="SMR" id="B8IZX7"/>
<dbReference type="STRING" id="525146.Ddes_1150"/>
<dbReference type="KEGG" id="dds:Ddes_1150"/>
<dbReference type="eggNOG" id="COG0253">
    <property type="taxonomic scope" value="Bacteria"/>
</dbReference>
<dbReference type="HOGENOM" id="CLU_053306_3_0_7"/>
<dbReference type="UniPathway" id="UPA00034">
    <property type="reaction ID" value="UER00025"/>
</dbReference>
<dbReference type="GO" id="GO:0005829">
    <property type="term" value="C:cytosol"/>
    <property type="evidence" value="ECO:0007669"/>
    <property type="project" value="TreeGrafter"/>
</dbReference>
<dbReference type="GO" id="GO:0008837">
    <property type="term" value="F:diaminopimelate epimerase activity"/>
    <property type="evidence" value="ECO:0007669"/>
    <property type="project" value="UniProtKB-UniRule"/>
</dbReference>
<dbReference type="GO" id="GO:0009089">
    <property type="term" value="P:lysine biosynthetic process via diaminopimelate"/>
    <property type="evidence" value="ECO:0007669"/>
    <property type="project" value="UniProtKB-UniRule"/>
</dbReference>
<dbReference type="FunFam" id="3.10.310.10:FF:000009">
    <property type="entry name" value="Diaminopimelate epimerase chloroplastic"/>
    <property type="match status" value="1"/>
</dbReference>
<dbReference type="Gene3D" id="3.10.310.10">
    <property type="entry name" value="Diaminopimelate Epimerase, Chain A, domain 1"/>
    <property type="match status" value="2"/>
</dbReference>
<dbReference type="HAMAP" id="MF_00197">
    <property type="entry name" value="DAP_epimerase"/>
    <property type="match status" value="1"/>
</dbReference>
<dbReference type="InterPro" id="IPR018510">
    <property type="entry name" value="DAP_epimerase_AS"/>
</dbReference>
<dbReference type="InterPro" id="IPR001653">
    <property type="entry name" value="DAP_epimerase_DapF"/>
</dbReference>
<dbReference type="NCBIfam" id="TIGR00652">
    <property type="entry name" value="DapF"/>
    <property type="match status" value="1"/>
</dbReference>
<dbReference type="PANTHER" id="PTHR31689:SF0">
    <property type="entry name" value="DIAMINOPIMELATE EPIMERASE"/>
    <property type="match status" value="1"/>
</dbReference>
<dbReference type="PANTHER" id="PTHR31689">
    <property type="entry name" value="DIAMINOPIMELATE EPIMERASE, CHLOROPLASTIC"/>
    <property type="match status" value="1"/>
</dbReference>
<dbReference type="Pfam" id="PF01678">
    <property type="entry name" value="DAP_epimerase"/>
    <property type="match status" value="2"/>
</dbReference>
<dbReference type="SUPFAM" id="SSF54506">
    <property type="entry name" value="Diaminopimelate epimerase-like"/>
    <property type="match status" value="2"/>
</dbReference>
<dbReference type="PROSITE" id="PS01326">
    <property type="entry name" value="DAP_EPIMERASE"/>
    <property type="match status" value="1"/>
</dbReference>
<keyword id="KW-0028">Amino-acid biosynthesis</keyword>
<keyword id="KW-0963">Cytoplasm</keyword>
<keyword id="KW-0413">Isomerase</keyword>
<keyword id="KW-0457">Lysine biosynthesis</keyword>
<sequence>MAVALRFTKMQGIGNDYVYINGFQERIDSPGELARKISDRHFGIGSDGLVLILPSATADVRMRMFNADGSESEMCGNAVRCVGKYVYDHGIQVKDVITVETRAGVKIVRLLFEAGKVCGATVDMGEPELHPARIPVLTETSGDGSQQRFVARPVDVNGQLYEITAVSMGNPHAVIFMKGIDDLDLPRIGPRFEHHPLFPKRTNTEFAEVISSTKVRMRVWERGAGETLACGTGACAVAVACVLNGYAGRDVEVELKGGSLHIHWDEASNHVYMTGGAVTVFSGEYYI</sequence>
<protein>
    <recommendedName>
        <fullName evidence="1">Diaminopimelate epimerase</fullName>
        <shortName evidence="1">DAP epimerase</shortName>
        <ecNumber evidence="1">5.1.1.7</ecNumber>
    </recommendedName>
    <alternativeName>
        <fullName evidence="1">PLP-independent amino acid racemase</fullName>
    </alternativeName>
</protein>
<gene>
    <name evidence="1" type="primary">dapF</name>
    <name type="ordered locus">Ddes_1150</name>
</gene>